<reference key="1">
    <citation type="submission" date="1997-08" db="EMBL/GenBank/DDBJ databases">
        <authorList>
            <person name="Sasakura Y."/>
            <person name="Ogasawara M."/>
            <person name="Makabe K.W."/>
        </authorList>
    </citation>
    <scope>NUCLEOTIDE SEQUENCE [GENOMIC DNA]</scope>
</reference>
<accession>O15978</accession>
<dbReference type="EMBL" id="AB006608">
    <property type="protein sequence ID" value="BAA21878.1"/>
    <property type="molecule type" value="Genomic_DNA"/>
</dbReference>
<dbReference type="SMR" id="O15978"/>
<dbReference type="GlyCosmos" id="O15978">
    <property type="glycosylation" value="2 sites, No reported glycans"/>
</dbReference>
<dbReference type="GO" id="GO:0005615">
    <property type="term" value="C:extracellular space"/>
    <property type="evidence" value="ECO:0007669"/>
    <property type="project" value="TreeGrafter"/>
</dbReference>
<dbReference type="GO" id="GO:0005125">
    <property type="term" value="F:cytokine activity"/>
    <property type="evidence" value="ECO:0007669"/>
    <property type="project" value="TreeGrafter"/>
</dbReference>
<dbReference type="GO" id="GO:0005109">
    <property type="term" value="F:frizzled binding"/>
    <property type="evidence" value="ECO:0007669"/>
    <property type="project" value="TreeGrafter"/>
</dbReference>
<dbReference type="GO" id="GO:0060070">
    <property type="term" value="P:canonical Wnt signaling pathway"/>
    <property type="evidence" value="ECO:0007669"/>
    <property type="project" value="TreeGrafter"/>
</dbReference>
<dbReference type="GO" id="GO:0045165">
    <property type="term" value="P:cell fate commitment"/>
    <property type="evidence" value="ECO:0007669"/>
    <property type="project" value="TreeGrafter"/>
</dbReference>
<dbReference type="GO" id="GO:0030182">
    <property type="term" value="P:neuron differentiation"/>
    <property type="evidence" value="ECO:0007669"/>
    <property type="project" value="TreeGrafter"/>
</dbReference>
<dbReference type="CDD" id="cd19337">
    <property type="entry name" value="Wnt_Wnt5"/>
    <property type="match status" value="1"/>
</dbReference>
<dbReference type="FunFam" id="3.30.2460.20:FF:000001">
    <property type="entry name" value="Wnt homolog"/>
    <property type="match status" value="1"/>
</dbReference>
<dbReference type="Gene3D" id="3.30.2460.20">
    <property type="match status" value="1"/>
</dbReference>
<dbReference type="InterPro" id="IPR005817">
    <property type="entry name" value="Wnt"/>
</dbReference>
<dbReference type="InterPro" id="IPR043158">
    <property type="entry name" value="Wnt_C"/>
</dbReference>
<dbReference type="InterPro" id="IPR018161">
    <property type="entry name" value="Wnt_CS"/>
</dbReference>
<dbReference type="PANTHER" id="PTHR12027:SF77">
    <property type="entry name" value="PROTEIN WNT-5"/>
    <property type="match status" value="1"/>
</dbReference>
<dbReference type="PANTHER" id="PTHR12027">
    <property type="entry name" value="WNT RELATED"/>
    <property type="match status" value="1"/>
</dbReference>
<dbReference type="Pfam" id="PF00110">
    <property type="entry name" value="wnt"/>
    <property type="match status" value="1"/>
</dbReference>
<dbReference type="PRINTS" id="PR01349">
    <property type="entry name" value="WNTPROTEIN"/>
</dbReference>
<dbReference type="SMART" id="SM00097">
    <property type="entry name" value="WNT1"/>
    <property type="match status" value="1"/>
</dbReference>
<dbReference type="PROSITE" id="PS00246">
    <property type="entry name" value="WNT1"/>
    <property type="match status" value="1"/>
</dbReference>
<gene>
    <name type="primary">WNT5</name>
</gene>
<comment type="function">
    <text evidence="1">Ligand for members of the frizzled family of seven transmembrane receptors. Probable developmental protein. May be a signaling molecule which affects the development of discrete regions of tissues. Is likely to signal over only few cell diameters (By similarity).</text>
</comment>
<comment type="subcellular location">
    <subcellularLocation>
        <location>Secreted</location>
        <location>Extracellular space</location>
        <location>Extracellular matrix</location>
    </subcellularLocation>
</comment>
<comment type="PTM">
    <text evidence="2 4">Palmitoleoylation is required for efficient binding to frizzled receptors. Depalmitoleoylation leads to Wnt signaling pathway inhibition.</text>
</comment>
<comment type="similarity">
    <text evidence="6">Belongs to the Wnt family.</text>
</comment>
<keyword id="KW-0217">Developmental protein</keyword>
<keyword id="KW-1015">Disulfide bond</keyword>
<keyword id="KW-0272">Extracellular matrix</keyword>
<keyword id="KW-0325">Glycoprotein</keyword>
<keyword id="KW-0449">Lipoprotein</keyword>
<keyword id="KW-0964">Secreted</keyword>
<keyword id="KW-0732">Signal</keyword>
<keyword id="KW-0879">Wnt signaling pathway</keyword>
<evidence type="ECO:0000250" key="1"/>
<evidence type="ECO:0000250" key="2">
    <source>
        <dbReference type="UniProtKB" id="P27467"/>
    </source>
</evidence>
<evidence type="ECO:0000250" key="3">
    <source>
        <dbReference type="UniProtKB" id="P28026"/>
    </source>
</evidence>
<evidence type="ECO:0000250" key="4">
    <source>
        <dbReference type="UniProtKB" id="P56704"/>
    </source>
</evidence>
<evidence type="ECO:0000255" key="5"/>
<evidence type="ECO:0000305" key="6"/>
<sequence>MVGMTRIQSAEPVWILFVLTLYSSVLMQVKPQLWSVGIERKKLFGETNTSVHCDEIRGLSRNQRSLCRTYNDHMYYVESGSKQGVEECQWQFRGQRWNCSLASNASPDKIIAVGSKETAFTYAITSGGVVQSIARACKSGNLMACGCSKRERPTGLGKDWNWGGCGDDIDYAYGFAHEFIDAQERDNSSPNDRRVKSHKAMNIHNNEAGRLSVVRASHTTCKCHGVSGSCSIKTCWLQTPQFRTIGDKLRQRYDDALEMRVTHRGQMKTRFSSDRNPSNIDLVYIDSSPDYCKVNHKLGILGTSGRECQLDSLAMDGCGLMCCGRGYTTKMVEVVKSCNCKFQWCCFVKCQQCKEKVLKHICN</sequence>
<proteinExistence type="inferred from homology"/>
<protein>
    <recommendedName>
        <fullName>Protein Wnt-5</fullName>
    </recommendedName>
</protein>
<organism>
    <name type="scientific">Halocynthia roretzi</name>
    <name type="common">Sea squirt</name>
    <name type="synonym">Cynthia roretzi</name>
    <dbReference type="NCBI Taxonomy" id="7729"/>
    <lineage>
        <taxon>Eukaryota</taxon>
        <taxon>Metazoa</taxon>
        <taxon>Chordata</taxon>
        <taxon>Tunicata</taxon>
        <taxon>Ascidiacea</taxon>
        <taxon>Stolidobranchia</taxon>
        <taxon>Pyuridae</taxon>
        <taxon>Halocynthia</taxon>
    </lineage>
</organism>
<name>WNT5_HALRO</name>
<feature type="signal peptide" evidence="5">
    <location>
        <begin position="1"/>
        <end position="27"/>
    </location>
</feature>
<feature type="chain" id="PRO_0000041439" description="Protein Wnt-5">
    <location>
        <begin position="28"/>
        <end position="363"/>
    </location>
</feature>
<feature type="lipid moiety-binding region" description="O-palmitoleoyl serine; by PORCN" evidence="4">
    <location>
        <position position="227"/>
    </location>
</feature>
<feature type="glycosylation site" description="N-linked (GlcNAc...) asparagine" evidence="5">
    <location>
        <position position="48"/>
    </location>
</feature>
<feature type="glycosylation site" description="N-linked (GlcNAc...) asparagine" evidence="5">
    <location>
        <position position="98"/>
    </location>
</feature>
<feature type="disulfide bond" evidence="3">
    <location>
        <begin position="88"/>
        <end position="99"/>
    </location>
</feature>
<feature type="disulfide bond" evidence="3">
    <location>
        <begin position="137"/>
        <end position="145"/>
    </location>
</feature>
<feature type="disulfide bond" evidence="3">
    <location>
        <begin position="147"/>
        <end position="165"/>
    </location>
</feature>
<feature type="disulfide bond" evidence="3">
    <location>
        <begin position="221"/>
        <end position="235"/>
    </location>
</feature>
<feature type="disulfide bond" evidence="3">
    <location>
        <begin position="223"/>
        <end position="230"/>
    </location>
</feature>
<feature type="disulfide bond" evidence="3">
    <location>
        <begin position="292"/>
        <end position="323"/>
    </location>
</feature>
<feature type="disulfide bond" evidence="3">
    <location>
        <begin position="308"/>
        <end position="318"/>
    </location>
</feature>
<feature type="disulfide bond" evidence="3">
    <location>
        <begin position="322"/>
        <end position="362"/>
    </location>
</feature>
<feature type="disulfide bond" evidence="3">
    <location>
        <begin position="338"/>
        <end position="353"/>
    </location>
</feature>
<feature type="disulfide bond" evidence="3">
    <location>
        <begin position="340"/>
        <end position="350"/>
    </location>
</feature>
<feature type="disulfide bond" evidence="3">
    <location>
        <begin position="345"/>
        <end position="346"/>
    </location>
</feature>